<keyword id="KW-0375">Hydrogen ion transport</keyword>
<keyword id="KW-0406">Ion transport</keyword>
<keyword id="KW-0813">Transport</keyword>
<gene>
    <name type="primary">VATE</name>
</gene>
<sequence length="226" mass="26163">MNDTDVQNQIQQMVRFMRQEAEEKANEISVSAEEEFNIEKLQLVEAEKKKIRQEYERKAKQVDVRRKIEYSMQLNASRIKVLQAQDDLVNAMKEAASKELLLVSGDHHQYRNLLKELIVQSLLRLKEPAVLLRCREEDKHHVHRVLHSAREEYGEKACVSHPEVIVDDIHLPPAPTSYDSHELSCSGGVVMASRDGKIVFENTLDARLEVAFRKKLPQIRKQLFAV</sequence>
<comment type="function">
    <text evidence="1">Subunit of the peripheral V1 complex of vacuolar ATPase essential for assembly or catalytic function. V-ATPase is responsible for acidifying a variety of intracellular compartments in eukaryotic cells (By similarity).</text>
</comment>
<comment type="subunit">
    <text>V-ATPase is a heteromultimeric enzyme composed of a peripheral catalytic V1 complex (components A to H) attached to an integral membrane V0 proton pore complex (components: a, c, c', c'' and d).</text>
</comment>
<comment type="similarity">
    <text evidence="2">Belongs to the V-ATPase E subunit family.</text>
</comment>
<evidence type="ECO:0000250" key="1"/>
<evidence type="ECO:0000305" key="2"/>
<accession>Q40272</accession>
<proteinExistence type="evidence at transcript level"/>
<protein>
    <recommendedName>
        <fullName>V-type proton ATPase subunit E</fullName>
        <shortName>V-ATPase subunit E</shortName>
    </recommendedName>
    <alternativeName>
        <fullName>Vacuolar proton pump subunit E</fullName>
    </alternativeName>
</protein>
<feature type="chain" id="PRO_0000117305" description="V-type proton ATPase subunit E">
    <location>
        <begin position="1"/>
        <end position="226"/>
    </location>
</feature>
<name>VATE_MESCR</name>
<reference key="1">
    <citation type="journal article" date="1996" name="Biochim. Biophys. Acta">
        <title>cDNA sequence and expression of subunit E of the vacuolar H(+)-ATPase in the inducible Crassulacean acid metabolism plant Mesembryanthemum crystallinum.</title>
        <authorList>
            <person name="Dietz K.-J."/>
            <person name="Arbinger B."/>
        </authorList>
    </citation>
    <scope>NUCLEOTIDE SEQUENCE [MRNA]</scope>
</reference>
<dbReference type="EMBL" id="X92118">
    <property type="protein sequence ID" value="CAA63087.1"/>
    <property type="molecule type" value="mRNA"/>
</dbReference>
<dbReference type="PIR" id="T12581">
    <property type="entry name" value="T12581"/>
</dbReference>
<dbReference type="SMR" id="Q40272"/>
<dbReference type="MINT" id="Q40272"/>
<dbReference type="GO" id="GO:0033178">
    <property type="term" value="C:proton-transporting two-sector ATPase complex, catalytic domain"/>
    <property type="evidence" value="ECO:0007669"/>
    <property type="project" value="InterPro"/>
</dbReference>
<dbReference type="GO" id="GO:0046961">
    <property type="term" value="F:proton-transporting ATPase activity, rotational mechanism"/>
    <property type="evidence" value="ECO:0007669"/>
    <property type="project" value="InterPro"/>
</dbReference>
<dbReference type="Gene3D" id="6.10.250.1620">
    <property type="match status" value="1"/>
</dbReference>
<dbReference type="Gene3D" id="3.30.2320.30">
    <property type="entry name" value="ATP synthase, E subunit, C-terminal"/>
    <property type="match status" value="1"/>
</dbReference>
<dbReference type="HAMAP" id="MF_00311">
    <property type="entry name" value="ATP_synth_E_arch"/>
    <property type="match status" value="1"/>
</dbReference>
<dbReference type="InterPro" id="IPR038495">
    <property type="entry name" value="ATPase_E_C"/>
</dbReference>
<dbReference type="InterPro" id="IPR002842">
    <property type="entry name" value="ATPase_V1_Esu"/>
</dbReference>
<dbReference type="PANTHER" id="PTHR45715">
    <property type="entry name" value="ATPASE H+-TRANSPORTING V1 SUBUNIT E1A-RELATED"/>
    <property type="match status" value="1"/>
</dbReference>
<dbReference type="Pfam" id="PF01991">
    <property type="entry name" value="vATP-synt_E"/>
    <property type="match status" value="1"/>
</dbReference>
<dbReference type="SUPFAM" id="SSF160527">
    <property type="entry name" value="V-type ATPase subunit E-like"/>
    <property type="match status" value="1"/>
</dbReference>
<organism>
    <name type="scientific">Mesembryanthemum crystallinum</name>
    <name type="common">Common ice plant</name>
    <name type="synonym">Cryophytum crystallinum</name>
    <dbReference type="NCBI Taxonomy" id="3544"/>
    <lineage>
        <taxon>Eukaryota</taxon>
        <taxon>Viridiplantae</taxon>
        <taxon>Streptophyta</taxon>
        <taxon>Embryophyta</taxon>
        <taxon>Tracheophyta</taxon>
        <taxon>Spermatophyta</taxon>
        <taxon>Magnoliopsida</taxon>
        <taxon>eudicotyledons</taxon>
        <taxon>Gunneridae</taxon>
        <taxon>Pentapetalae</taxon>
        <taxon>Caryophyllales</taxon>
        <taxon>Aizoaceae</taxon>
        <taxon>Mesembryanthemum</taxon>
        <taxon>Mesembryanthemum subgen. Cryophytum</taxon>
    </lineage>
</organism>